<proteinExistence type="inferred from homology"/>
<protein>
    <recommendedName>
        <fullName>Putative defensin-like protein 230</fullName>
    </recommendedName>
    <alternativeName>
        <fullName>Putative S locus cysteine-rich-like protein 24</fullName>
        <shortName>Protein SCRL24</shortName>
        <shortName>SCR-like protein 24</shortName>
    </alternativeName>
</protein>
<gene>
    <name type="primary">SCRL24</name>
    <name type="ordered locus">At4g32717</name>
    <name type="ORF">F4D11</name>
</gene>
<name>DF230_ARATH</name>
<comment type="subcellular location">
    <subcellularLocation>
        <location evidence="1">Secreted</location>
    </subcellularLocation>
</comment>
<comment type="similarity">
    <text evidence="3">Belongs to the DEFL family.</text>
</comment>
<dbReference type="EMBL" id="AL022537">
    <property type="status" value="NOT_ANNOTATED_CDS"/>
    <property type="molecule type" value="Genomic_DNA"/>
</dbReference>
<dbReference type="EMBL" id="AL161582">
    <property type="status" value="NOT_ANNOTATED_CDS"/>
    <property type="molecule type" value="Genomic_DNA"/>
</dbReference>
<dbReference type="EMBL" id="CP002687">
    <property type="protein sequence ID" value="AEE86108.1"/>
    <property type="molecule type" value="Genomic_DNA"/>
</dbReference>
<dbReference type="RefSeq" id="NP_001031776.1">
    <property type="nucleotide sequence ID" value="NM_001036699.2"/>
</dbReference>
<dbReference type="SMR" id="P82643"/>
<dbReference type="PaxDb" id="3702-AT4G32717.1"/>
<dbReference type="ProteomicsDB" id="224199"/>
<dbReference type="EnsemblPlants" id="AT4G32717.1">
    <property type="protein sequence ID" value="AT4G32717.1"/>
    <property type="gene ID" value="AT4G32717"/>
</dbReference>
<dbReference type="GeneID" id="3770577"/>
<dbReference type="Gramene" id="AT4G32717.1">
    <property type="protein sequence ID" value="AT4G32717.1"/>
    <property type="gene ID" value="AT4G32717"/>
</dbReference>
<dbReference type="KEGG" id="ath:AT4G32717"/>
<dbReference type="Araport" id="AT4G32717"/>
<dbReference type="TAIR" id="AT4G32717">
    <property type="gene designation" value="SCRL24"/>
</dbReference>
<dbReference type="HOGENOM" id="CLU_2486425_0_0_1"/>
<dbReference type="InParanoid" id="P82643"/>
<dbReference type="OMA" id="YKHYCEC"/>
<dbReference type="OrthoDB" id="1022701at2759"/>
<dbReference type="PhylomeDB" id="P82643"/>
<dbReference type="PRO" id="PR:P82643"/>
<dbReference type="Proteomes" id="UP000006548">
    <property type="component" value="Chromosome 4"/>
</dbReference>
<dbReference type="ExpressionAtlas" id="P82643">
    <property type="expression patterns" value="baseline"/>
</dbReference>
<dbReference type="GO" id="GO:0005576">
    <property type="term" value="C:extracellular region"/>
    <property type="evidence" value="ECO:0007669"/>
    <property type="project" value="UniProtKB-SubCell"/>
</dbReference>
<dbReference type="GO" id="GO:0050832">
    <property type="term" value="P:defense response to fungus"/>
    <property type="evidence" value="ECO:0007669"/>
    <property type="project" value="UniProtKB-KW"/>
</dbReference>
<dbReference type="GO" id="GO:0031640">
    <property type="term" value="P:killing of cells of another organism"/>
    <property type="evidence" value="ECO:0007669"/>
    <property type="project" value="UniProtKB-KW"/>
</dbReference>
<dbReference type="GO" id="GO:0007165">
    <property type="term" value="P:signal transduction"/>
    <property type="evidence" value="ECO:0007669"/>
    <property type="project" value="InterPro"/>
</dbReference>
<dbReference type="InterPro" id="IPR010682">
    <property type="entry name" value="SCRL"/>
</dbReference>
<dbReference type="PANTHER" id="PTHR34450:SF6">
    <property type="entry name" value="DEFENSIN-LIKE PROTEIN 241-RELATED"/>
    <property type="match status" value="1"/>
</dbReference>
<dbReference type="PANTHER" id="PTHR34450">
    <property type="entry name" value="DEFENSIN-LIKE PROTEIN 245-RELATED"/>
    <property type="match status" value="1"/>
</dbReference>
<dbReference type="Pfam" id="PF06876">
    <property type="entry name" value="SCRL"/>
    <property type="match status" value="1"/>
</dbReference>
<feature type="signal peptide" evidence="2">
    <location>
        <begin position="1"/>
        <end position="26"/>
    </location>
</feature>
<feature type="chain" id="PRO_0000031950" description="Putative defensin-like protein 230">
    <location>
        <begin position="27"/>
        <end position="89"/>
    </location>
</feature>
<feature type="disulfide bond" evidence="1">
    <location>
        <begin position="30"/>
        <end position="84"/>
    </location>
</feature>
<feature type="disulfide bond" evidence="1">
    <location>
        <begin position="40"/>
        <end position="65"/>
    </location>
</feature>
<feature type="disulfide bond" evidence="1">
    <location>
        <begin position="48"/>
        <end position="78"/>
    </location>
</feature>
<feature type="disulfide bond" evidence="1">
    <location>
        <begin position="63"/>
        <end position="80"/>
    </location>
</feature>
<accession>P82643</accession>
<reference evidence="3" key="1">
    <citation type="journal article" date="1999" name="Nature">
        <title>Sequence and analysis of chromosome 4 of the plant Arabidopsis thaliana.</title>
        <authorList>
            <person name="Mayer K.F.X."/>
            <person name="Schueller C."/>
            <person name="Wambutt R."/>
            <person name="Murphy G."/>
            <person name="Volckaert G."/>
            <person name="Pohl T."/>
            <person name="Duesterhoeft A."/>
            <person name="Stiekema W."/>
            <person name="Entian K.-D."/>
            <person name="Terryn N."/>
            <person name="Harris B."/>
            <person name="Ansorge W."/>
            <person name="Brandt P."/>
            <person name="Grivell L.A."/>
            <person name="Rieger M."/>
            <person name="Weichselgartner M."/>
            <person name="de Simone V."/>
            <person name="Obermaier B."/>
            <person name="Mache R."/>
            <person name="Mueller M."/>
            <person name="Kreis M."/>
            <person name="Delseny M."/>
            <person name="Puigdomenech P."/>
            <person name="Watson M."/>
            <person name="Schmidtheini T."/>
            <person name="Reichert B."/>
            <person name="Portetelle D."/>
            <person name="Perez-Alonso M."/>
            <person name="Boutry M."/>
            <person name="Bancroft I."/>
            <person name="Vos P."/>
            <person name="Hoheisel J."/>
            <person name="Zimmermann W."/>
            <person name="Wedler H."/>
            <person name="Ridley P."/>
            <person name="Langham S.-A."/>
            <person name="McCullagh B."/>
            <person name="Bilham L."/>
            <person name="Robben J."/>
            <person name="van der Schueren J."/>
            <person name="Grymonprez B."/>
            <person name="Chuang Y.-J."/>
            <person name="Vandenbussche F."/>
            <person name="Braeken M."/>
            <person name="Weltjens I."/>
            <person name="Voet M."/>
            <person name="Bastiaens I."/>
            <person name="Aert R."/>
            <person name="Defoor E."/>
            <person name="Weitzenegger T."/>
            <person name="Bothe G."/>
            <person name="Ramsperger U."/>
            <person name="Hilbert H."/>
            <person name="Braun M."/>
            <person name="Holzer E."/>
            <person name="Brandt A."/>
            <person name="Peters S."/>
            <person name="van Staveren M."/>
            <person name="Dirkse W."/>
            <person name="Mooijman P."/>
            <person name="Klein Lankhorst R."/>
            <person name="Rose M."/>
            <person name="Hauf J."/>
            <person name="Koetter P."/>
            <person name="Berneiser S."/>
            <person name="Hempel S."/>
            <person name="Feldpausch M."/>
            <person name="Lamberth S."/>
            <person name="Van den Daele H."/>
            <person name="De Keyser A."/>
            <person name="Buysshaert C."/>
            <person name="Gielen J."/>
            <person name="Villarroel R."/>
            <person name="De Clercq R."/>
            <person name="van Montagu M."/>
            <person name="Rogers J."/>
            <person name="Cronin A."/>
            <person name="Quail M.A."/>
            <person name="Bray-Allen S."/>
            <person name="Clark L."/>
            <person name="Doggett J."/>
            <person name="Hall S."/>
            <person name="Kay M."/>
            <person name="Lennard N."/>
            <person name="McLay K."/>
            <person name="Mayes R."/>
            <person name="Pettett A."/>
            <person name="Rajandream M.A."/>
            <person name="Lyne M."/>
            <person name="Benes V."/>
            <person name="Rechmann S."/>
            <person name="Borkova D."/>
            <person name="Bloecker H."/>
            <person name="Scharfe M."/>
            <person name="Grimm M."/>
            <person name="Loehnert T.-H."/>
            <person name="Dose S."/>
            <person name="de Haan M."/>
            <person name="Maarse A.C."/>
            <person name="Schaefer M."/>
            <person name="Mueller-Auer S."/>
            <person name="Gabel C."/>
            <person name="Fuchs M."/>
            <person name="Fartmann B."/>
            <person name="Granderath K."/>
            <person name="Dauner D."/>
            <person name="Herzl A."/>
            <person name="Neumann S."/>
            <person name="Argiriou A."/>
            <person name="Vitale D."/>
            <person name="Liguori R."/>
            <person name="Piravandi E."/>
            <person name="Massenet O."/>
            <person name="Quigley F."/>
            <person name="Clabauld G."/>
            <person name="Muendlein A."/>
            <person name="Felber R."/>
            <person name="Schnabl S."/>
            <person name="Hiller R."/>
            <person name="Schmidt W."/>
            <person name="Lecharny A."/>
            <person name="Aubourg S."/>
            <person name="Chefdor F."/>
            <person name="Cooke R."/>
            <person name="Berger C."/>
            <person name="Monfort A."/>
            <person name="Casacuberta E."/>
            <person name="Gibbons T."/>
            <person name="Weber N."/>
            <person name="Vandenbol M."/>
            <person name="Bargues M."/>
            <person name="Terol J."/>
            <person name="Torres A."/>
            <person name="Perez-Perez A."/>
            <person name="Purnelle B."/>
            <person name="Bent E."/>
            <person name="Johnson S."/>
            <person name="Tacon D."/>
            <person name="Jesse T."/>
            <person name="Heijnen L."/>
            <person name="Schwarz S."/>
            <person name="Scholler P."/>
            <person name="Heber S."/>
            <person name="Francs P."/>
            <person name="Bielke C."/>
            <person name="Frishman D."/>
            <person name="Haase D."/>
            <person name="Lemcke K."/>
            <person name="Mewes H.-W."/>
            <person name="Stocker S."/>
            <person name="Zaccaria P."/>
            <person name="Bevan M."/>
            <person name="Wilson R.K."/>
            <person name="de la Bastide M."/>
            <person name="Habermann K."/>
            <person name="Parnell L."/>
            <person name="Dedhia N."/>
            <person name="Gnoj L."/>
            <person name="Schutz K."/>
            <person name="Huang E."/>
            <person name="Spiegel L."/>
            <person name="Sekhon M."/>
            <person name="Murray J."/>
            <person name="Sheet P."/>
            <person name="Cordes M."/>
            <person name="Abu-Threideh J."/>
            <person name="Stoneking T."/>
            <person name="Kalicki J."/>
            <person name="Graves T."/>
            <person name="Harmon G."/>
            <person name="Edwards J."/>
            <person name="Latreille P."/>
            <person name="Courtney L."/>
            <person name="Cloud J."/>
            <person name="Abbott A."/>
            <person name="Scott K."/>
            <person name="Johnson D."/>
            <person name="Minx P."/>
            <person name="Bentley D."/>
            <person name="Fulton B."/>
            <person name="Miller N."/>
            <person name="Greco T."/>
            <person name="Kemp K."/>
            <person name="Kramer J."/>
            <person name="Fulton L."/>
            <person name="Mardis E."/>
            <person name="Dante M."/>
            <person name="Pepin K."/>
            <person name="Hillier L.W."/>
            <person name="Nelson J."/>
            <person name="Spieth J."/>
            <person name="Ryan E."/>
            <person name="Andrews S."/>
            <person name="Geisel C."/>
            <person name="Layman D."/>
            <person name="Du H."/>
            <person name="Ali J."/>
            <person name="Berghoff A."/>
            <person name="Jones K."/>
            <person name="Drone K."/>
            <person name="Cotton M."/>
            <person name="Joshu C."/>
            <person name="Antonoiu B."/>
            <person name="Zidanic M."/>
            <person name="Strong C."/>
            <person name="Sun H."/>
            <person name="Lamar B."/>
            <person name="Yordan C."/>
            <person name="Ma P."/>
            <person name="Zhong J."/>
            <person name="Preston R."/>
            <person name="Vil D."/>
            <person name="Shekher M."/>
            <person name="Matero A."/>
            <person name="Shah R."/>
            <person name="Swaby I.K."/>
            <person name="O'Shaughnessy A."/>
            <person name="Rodriguez M."/>
            <person name="Hoffman J."/>
            <person name="Till S."/>
            <person name="Granat S."/>
            <person name="Shohdy N."/>
            <person name="Hasegawa A."/>
            <person name="Hameed A."/>
            <person name="Lodhi M."/>
            <person name="Johnson A."/>
            <person name="Chen E."/>
            <person name="Marra M.A."/>
            <person name="Martienssen R."/>
            <person name="McCombie W.R."/>
        </authorList>
    </citation>
    <scope>NUCLEOTIDE SEQUENCE [LARGE SCALE GENOMIC DNA]</scope>
    <source>
        <strain>cv. Columbia</strain>
    </source>
</reference>
<reference key="2">
    <citation type="journal article" date="2017" name="Plant J.">
        <title>Araport11: a complete reannotation of the Arabidopsis thaliana reference genome.</title>
        <authorList>
            <person name="Cheng C.Y."/>
            <person name="Krishnakumar V."/>
            <person name="Chan A.P."/>
            <person name="Thibaud-Nissen F."/>
            <person name="Schobel S."/>
            <person name="Town C.D."/>
        </authorList>
    </citation>
    <scope>GENOME REANNOTATION</scope>
    <source>
        <strain>cv. Columbia</strain>
    </source>
</reference>
<reference evidence="3" key="3">
    <citation type="journal article" date="2001" name="Plant Mol. Biol.">
        <title>Two large Arabidopsis thaliana gene families are homologous to the Brassica gene superfamily that encodes pollen coat proteins and the male component of the self-incompatibility response.</title>
        <authorList>
            <person name="Vanoosthuyse V."/>
            <person name="Miege C."/>
            <person name="Dumas C."/>
            <person name="Cock J.M."/>
        </authorList>
    </citation>
    <scope>IDENTIFICATION</scope>
</reference>
<reference key="4">
    <citation type="journal article" date="2005" name="Plant Physiol.">
        <title>Genome organization of more than 300 defensin-like genes in Arabidopsis.</title>
        <authorList>
            <person name="Silverstein K.A.T."/>
            <person name="Graham M.A."/>
            <person name="Paape T.D."/>
            <person name="VandenBosch K.A."/>
        </authorList>
    </citation>
    <scope>GENE FAMILY</scope>
</reference>
<keyword id="KW-0929">Antimicrobial</keyword>
<keyword id="KW-1015">Disulfide bond</keyword>
<keyword id="KW-0295">Fungicide</keyword>
<keyword id="KW-0611">Plant defense</keyword>
<keyword id="KW-1185">Reference proteome</keyword>
<keyword id="KW-0964">Secreted</keyword>
<keyword id="KW-0732">Signal</keyword>
<evidence type="ECO:0000250" key="1"/>
<evidence type="ECO:0000255" key="2"/>
<evidence type="ECO:0000305" key="3"/>
<sequence>MRSVIWFIVSYTLMLLVLRGGKEVEAEKLCTTIGDLDGKCSQDGEKLCMRYMTDQSKKKFLSCTCNNVVMLHKYKHYCECQSHCTPKQT</sequence>
<organism evidence="3">
    <name type="scientific">Arabidopsis thaliana</name>
    <name type="common">Mouse-ear cress</name>
    <dbReference type="NCBI Taxonomy" id="3702"/>
    <lineage>
        <taxon>Eukaryota</taxon>
        <taxon>Viridiplantae</taxon>
        <taxon>Streptophyta</taxon>
        <taxon>Embryophyta</taxon>
        <taxon>Tracheophyta</taxon>
        <taxon>Spermatophyta</taxon>
        <taxon>Magnoliopsida</taxon>
        <taxon>eudicotyledons</taxon>
        <taxon>Gunneridae</taxon>
        <taxon>Pentapetalae</taxon>
        <taxon>rosids</taxon>
        <taxon>malvids</taxon>
        <taxon>Brassicales</taxon>
        <taxon>Brassicaceae</taxon>
        <taxon>Camelineae</taxon>
        <taxon>Arabidopsis</taxon>
    </lineage>
</organism>